<keyword id="KW-0535">Nitrogen fixation</keyword>
<keyword id="KW-1185">Reference proteome</keyword>
<dbReference type="EMBL" id="U47055">
    <property type="protein sequence ID" value="AAA87947.1"/>
    <property type="molecule type" value="Genomic_DNA"/>
</dbReference>
<dbReference type="EMBL" id="BA000019">
    <property type="protein sequence ID" value="BAB73395.1"/>
    <property type="molecule type" value="Genomic_DNA"/>
</dbReference>
<dbReference type="PIR" id="AC1986">
    <property type="entry name" value="AC1986"/>
</dbReference>
<dbReference type="RefSeq" id="WP_010995610.1">
    <property type="nucleotide sequence ID" value="NZ_JACJQQ010000003.1"/>
</dbReference>
<dbReference type="SMR" id="Q44144"/>
<dbReference type="STRING" id="103690.gene:10493453"/>
<dbReference type="KEGG" id="ana:all1438"/>
<dbReference type="eggNOG" id="COG2710">
    <property type="taxonomic scope" value="Bacteria"/>
</dbReference>
<dbReference type="OrthoDB" id="9767044at2"/>
<dbReference type="UniPathway" id="UPA00782"/>
<dbReference type="Proteomes" id="UP000002483">
    <property type="component" value="Chromosome"/>
</dbReference>
<dbReference type="GO" id="GO:0016163">
    <property type="term" value="F:nitrogenase activity"/>
    <property type="evidence" value="ECO:0007669"/>
    <property type="project" value="InterPro"/>
</dbReference>
<dbReference type="GO" id="GO:0009399">
    <property type="term" value="P:nitrogen fixation"/>
    <property type="evidence" value="ECO:0007669"/>
    <property type="project" value="UniProtKB-KW"/>
</dbReference>
<dbReference type="GO" id="GO:0065003">
    <property type="term" value="P:protein-containing complex assembly"/>
    <property type="evidence" value="ECO:0007669"/>
    <property type="project" value="InterPro"/>
</dbReference>
<dbReference type="CDD" id="cd01968">
    <property type="entry name" value="Nitrogenase_NifE_I"/>
    <property type="match status" value="1"/>
</dbReference>
<dbReference type="Gene3D" id="3.40.50.12380">
    <property type="entry name" value="Nitrogenase MoFe cofactor biosynthesis protein NifE, C-terminal"/>
    <property type="match status" value="1"/>
</dbReference>
<dbReference type="Gene3D" id="3.40.50.1980">
    <property type="entry name" value="Nitrogenase molybdenum iron protein domain"/>
    <property type="match status" value="1"/>
</dbReference>
<dbReference type="InterPro" id="IPR000510">
    <property type="entry name" value="Nase/OxRdtase_comp1"/>
</dbReference>
<dbReference type="InterPro" id="IPR000318">
    <property type="entry name" value="Nase_comp1_CS"/>
</dbReference>
<dbReference type="InterPro" id="IPR005973">
    <property type="entry name" value="NifE"/>
</dbReference>
<dbReference type="InterPro" id="IPR049939">
    <property type="entry name" value="NifE-like"/>
</dbReference>
<dbReference type="NCBIfam" id="TIGR01283">
    <property type="entry name" value="nifE"/>
    <property type="match status" value="1"/>
</dbReference>
<dbReference type="PANTHER" id="PTHR42956">
    <property type="entry name" value="NITROGENASE IRON-MOLYBDENUM COFACTOR BIOSYNTHESIS PROTEIN NIFE"/>
    <property type="match status" value="1"/>
</dbReference>
<dbReference type="PANTHER" id="PTHR42956:SF1">
    <property type="entry name" value="NITROGENASE IRON-MOLYBDENUM COFACTOR BIOSYNTHESIS PROTEIN NIFE"/>
    <property type="match status" value="1"/>
</dbReference>
<dbReference type="Pfam" id="PF00148">
    <property type="entry name" value="Oxidored_nitro"/>
    <property type="match status" value="1"/>
</dbReference>
<dbReference type="SUPFAM" id="SSF53807">
    <property type="entry name" value="Helical backbone' metal receptor"/>
    <property type="match status" value="1"/>
</dbReference>
<dbReference type="PROSITE" id="PS00699">
    <property type="entry name" value="NITROGENASE_1_1"/>
    <property type="match status" value="1"/>
</dbReference>
<dbReference type="PROSITE" id="PS00090">
    <property type="entry name" value="NITROGENASE_1_2"/>
    <property type="match status" value="1"/>
</dbReference>
<proteinExistence type="inferred from homology"/>
<accession>Q44144</accession>
<feature type="chain" id="PRO_0000153111" description="Nitrogenase iron-molybdenum cofactor biosynthesis protein NifE">
    <location>
        <begin position="1"/>
        <end position="480"/>
    </location>
</feature>
<feature type="region of interest" description="Disordered" evidence="1">
    <location>
        <begin position="12"/>
        <end position="35"/>
    </location>
</feature>
<reference key="1">
    <citation type="submission" date="1996-01" db="EMBL/GenBank/DDBJ databases">
        <authorList>
            <person name="Buikema W.J."/>
            <person name="Scappino L.A."/>
            <person name="Haselkorn R."/>
        </authorList>
    </citation>
    <scope>NUCLEOTIDE SEQUENCE [GENOMIC DNA]</scope>
</reference>
<reference key="2">
    <citation type="journal article" date="2001" name="DNA Res.">
        <title>Complete genomic sequence of the filamentous nitrogen-fixing cyanobacterium Anabaena sp. strain PCC 7120.</title>
        <authorList>
            <person name="Kaneko T."/>
            <person name="Nakamura Y."/>
            <person name="Wolk C.P."/>
            <person name="Kuritz T."/>
            <person name="Sasamoto S."/>
            <person name="Watanabe A."/>
            <person name="Iriguchi M."/>
            <person name="Ishikawa A."/>
            <person name="Kawashima K."/>
            <person name="Kimura T."/>
            <person name="Kishida Y."/>
            <person name="Kohara M."/>
            <person name="Matsumoto M."/>
            <person name="Matsuno A."/>
            <person name="Muraki A."/>
            <person name="Nakazaki N."/>
            <person name="Shimpo S."/>
            <person name="Sugimoto M."/>
            <person name="Takazawa M."/>
            <person name="Yamada M."/>
            <person name="Yasuda M."/>
            <person name="Tabata S."/>
        </authorList>
    </citation>
    <scope>NUCLEOTIDE SEQUENCE [LARGE SCALE GENOMIC DNA]</scope>
    <source>
        <strain>PCC 7120 / SAG 25.82 / UTEX 2576</strain>
    </source>
</reference>
<comment type="function">
    <text>This protein may play a role in the biosynthesis of the prosthetic group of nitrogenase (FeMo cofactor).</text>
</comment>
<comment type="pathway">
    <text>Cofactor biosynthesis; Fe-Mo cofactor biosynthesis.</text>
</comment>
<comment type="similarity">
    <text evidence="2">Belongs to the NifD/NifK/NifE/NifN family.</text>
</comment>
<sequence length="480" mass="52805">MKNTQGKINELLNESGCEHNQHKHGEKKNKSCSQQAQPGAAQGGCAFDGAMISLVPIVDAAHLVHGPIACAGNSWGSRGSLSSGPQLYKMGFTTDMSENDVIFGGEKKLYKAILEIHKRYNPSAVFVYATCVTALIGDDIDAVCKTAAEKIGTPVIPVIAPGFIGSKNLGNRFGGESLLDYVVGTAEPEYTTPYDINLIGEYNIAGEMWGVLPLLEKLGIRVLSKITGDARFEEIRYAHRAKLNVMICSRALLNMARKMEENYGIPYIEESFYGIDDMNRCLRNIAAKLGDPDLQARTEKLIAEETAALDLALAPYRARLKGKRVVLYTGGVKSWSIISAAKDLGIEVVATSTRKSTEEDKAKIKRLLGADGIMLEKGNAKELLQLVKDTQADMLIAGGRNQYTALKARIPFLDINQERHHPYAGYVGMIEMARELYEALYSPIWEQIRKPAPWDEDMGILAHEYTSNHDHILASIEELI</sequence>
<protein>
    <recommendedName>
        <fullName>Nitrogenase iron-molybdenum cofactor biosynthesis protein NifE</fullName>
    </recommendedName>
</protein>
<organism>
    <name type="scientific">Nostoc sp. (strain PCC 7120 / SAG 25.82 / UTEX 2576)</name>
    <dbReference type="NCBI Taxonomy" id="103690"/>
    <lineage>
        <taxon>Bacteria</taxon>
        <taxon>Bacillati</taxon>
        <taxon>Cyanobacteriota</taxon>
        <taxon>Cyanophyceae</taxon>
        <taxon>Nostocales</taxon>
        <taxon>Nostocaceae</taxon>
        <taxon>Nostoc</taxon>
    </lineage>
</organism>
<evidence type="ECO:0000256" key="1">
    <source>
        <dbReference type="SAM" id="MobiDB-lite"/>
    </source>
</evidence>
<evidence type="ECO:0000305" key="2"/>
<name>NIFE_NOSS1</name>
<gene>
    <name type="primary">nifE</name>
    <name type="ordered locus">all1438</name>
</gene>